<reference key="1">
    <citation type="journal article" date="2010" name="Environ. Microbiol.">
        <title>The genome of Syntrophomonas wolfei: new insights into syntrophic metabolism and biohydrogen production.</title>
        <authorList>
            <person name="Sieber J.R."/>
            <person name="Sims D.R."/>
            <person name="Han C."/>
            <person name="Kim E."/>
            <person name="Lykidis A."/>
            <person name="Lapidus A.L."/>
            <person name="McDonnald E."/>
            <person name="Rohlin L."/>
            <person name="Culley D.E."/>
            <person name="Gunsalus R."/>
            <person name="McInerney M.J."/>
        </authorList>
    </citation>
    <scope>NUCLEOTIDE SEQUENCE [LARGE SCALE GENOMIC DNA]</scope>
    <source>
        <strain>DSM 2245B / Goettingen</strain>
    </source>
</reference>
<organism>
    <name type="scientific">Syntrophomonas wolfei subsp. wolfei (strain DSM 2245B / Goettingen)</name>
    <dbReference type="NCBI Taxonomy" id="335541"/>
    <lineage>
        <taxon>Bacteria</taxon>
        <taxon>Bacillati</taxon>
        <taxon>Bacillota</taxon>
        <taxon>Clostridia</taxon>
        <taxon>Eubacteriales</taxon>
        <taxon>Syntrophomonadaceae</taxon>
        <taxon>Syntrophomonas</taxon>
    </lineage>
</organism>
<name>RL22_SYNWW</name>
<comment type="function">
    <text evidence="1">This protein binds specifically to 23S rRNA; its binding is stimulated by other ribosomal proteins, e.g. L4, L17, and L20. It is important during the early stages of 50S assembly. It makes multiple contacts with different domains of the 23S rRNA in the assembled 50S subunit and ribosome (By similarity).</text>
</comment>
<comment type="function">
    <text evidence="1">The globular domain of the protein is located near the polypeptide exit tunnel on the outside of the subunit, while an extended beta-hairpin is found that lines the wall of the exit tunnel in the center of the 70S ribosome.</text>
</comment>
<comment type="subunit">
    <text evidence="1">Part of the 50S ribosomal subunit.</text>
</comment>
<comment type="similarity">
    <text evidence="1">Belongs to the universal ribosomal protein uL22 family.</text>
</comment>
<dbReference type="EMBL" id="CP000448">
    <property type="protein sequence ID" value="ABI69619.1"/>
    <property type="molecule type" value="Genomic_DNA"/>
</dbReference>
<dbReference type="RefSeq" id="WP_011641703.1">
    <property type="nucleotide sequence ID" value="NC_008346.1"/>
</dbReference>
<dbReference type="SMR" id="Q0AUI5"/>
<dbReference type="STRING" id="335541.Swol_2328"/>
<dbReference type="KEGG" id="swo:Swol_2328"/>
<dbReference type="eggNOG" id="COG0091">
    <property type="taxonomic scope" value="Bacteria"/>
</dbReference>
<dbReference type="HOGENOM" id="CLU_083987_3_3_9"/>
<dbReference type="OrthoDB" id="9805969at2"/>
<dbReference type="Proteomes" id="UP000001968">
    <property type="component" value="Chromosome"/>
</dbReference>
<dbReference type="GO" id="GO:0022625">
    <property type="term" value="C:cytosolic large ribosomal subunit"/>
    <property type="evidence" value="ECO:0007669"/>
    <property type="project" value="TreeGrafter"/>
</dbReference>
<dbReference type="GO" id="GO:0019843">
    <property type="term" value="F:rRNA binding"/>
    <property type="evidence" value="ECO:0007669"/>
    <property type="project" value="UniProtKB-UniRule"/>
</dbReference>
<dbReference type="GO" id="GO:0003735">
    <property type="term" value="F:structural constituent of ribosome"/>
    <property type="evidence" value="ECO:0007669"/>
    <property type="project" value="InterPro"/>
</dbReference>
<dbReference type="GO" id="GO:0006412">
    <property type="term" value="P:translation"/>
    <property type="evidence" value="ECO:0007669"/>
    <property type="project" value="UniProtKB-UniRule"/>
</dbReference>
<dbReference type="CDD" id="cd00336">
    <property type="entry name" value="Ribosomal_L22"/>
    <property type="match status" value="1"/>
</dbReference>
<dbReference type="Gene3D" id="3.90.470.10">
    <property type="entry name" value="Ribosomal protein L22/L17"/>
    <property type="match status" value="1"/>
</dbReference>
<dbReference type="HAMAP" id="MF_01331_B">
    <property type="entry name" value="Ribosomal_uL22_B"/>
    <property type="match status" value="1"/>
</dbReference>
<dbReference type="InterPro" id="IPR001063">
    <property type="entry name" value="Ribosomal_uL22"/>
</dbReference>
<dbReference type="InterPro" id="IPR005727">
    <property type="entry name" value="Ribosomal_uL22_bac/chlpt-type"/>
</dbReference>
<dbReference type="InterPro" id="IPR047867">
    <property type="entry name" value="Ribosomal_uL22_bac/org-type"/>
</dbReference>
<dbReference type="InterPro" id="IPR018260">
    <property type="entry name" value="Ribosomal_uL22_CS"/>
</dbReference>
<dbReference type="InterPro" id="IPR036394">
    <property type="entry name" value="Ribosomal_uL22_sf"/>
</dbReference>
<dbReference type="NCBIfam" id="TIGR01044">
    <property type="entry name" value="rplV_bact"/>
    <property type="match status" value="1"/>
</dbReference>
<dbReference type="PANTHER" id="PTHR13501">
    <property type="entry name" value="CHLOROPLAST 50S RIBOSOMAL PROTEIN L22-RELATED"/>
    <property type="match status" value="1"/>
</dbReference>
<dbReference type="PANTHER" id="PTHR13501:SF8">
    <property type="entry name" value="LARGE RIBOSOMAL SUBUNIT PROTEIN UL22M"/>
    <property type="match status" value="1"/>
</dbReference>
<dbReference type="Pfam" id="PF00237">
    <property type="entry name" value="Ribosomal_L22"/>
    <property type="match status" value="1"/>
</dbReference>
<dbReference type="SUPFAM" id="SSF54843">
    <property type="entry name" value="Ribosomal protein L22"/>
    <property type="match status" value="1"/>
</dbReference>
<dbReference type="PROSITE" id="PS00464">
    <property type="entry name" value="RIBOSOMAL_L22"/>
    <property type="match status" value="1"/>
</dbReference>
<sequence length="113" mass="12986">MEARAIARYIRVSPFKARQVADLVRGKDTEEAMAILRYTNKKSAPLIRKVLQSAIANAEHNFDMDSNALVVSQIFIDEGPIVKRMRPRAYGRADVRRHRTSHITVVLREREVK</sequence>
<gene>
    <name evidence="1" type="primary">rplV</name>
    <name type="ordered locus">Swol_2328</name>
</gene>
<evidence type="ECO:0000255" key="1">
    <source>
        <dbReference type="HAMAP-Rule" id="MF_01331"/>
    </source>
</evidence>
<evidence type="ECO:0000305" key="2"/>
<feature type="chain" id="PRO_1000052672" description="Large ribosomal subunit protein uL22">
    <location>
        <begin position="1"/>
        <end position="113"/>
    </location>
</feature>
<accession>Q0AUI5</accession>
<protein>
    <recommendedName>
        <fullName evidence="1">Large ribosomal subunit protein uL22</fullName>
    </recommendedName>
    <alternativeName>
        <fullName evidence="2">50S ribosomal protein L22</fullName>
    </alternativeName>
</protein>
<proteinExistence type="inferred from homology"/>
<keyword id="KW-1185">Reference proteome</keyword>
<keyword id="KW-0687">Ribonucleoprotein</keyword>
<keyword id="KW-0689">Ribosomal protein</keyword>
<keyword id="KW-0694">RNA-binding</keyword>
<keyword id="KW-0699">rRNA-binding</keyword>